<proteinExistence type="evidence at protein level"/>
<protein>
    <recommendedName>
        <fullName evidence="29">Transitional endoplasmic reticulum ATPase homolog 1</fullName>
        <ecNumber evidence="13 14 19">3.6.4.6</ecNumber>
    </recommendedName>
    <alternativeName>
        <fullName evidence="30">Cell division cycle-related protein 48.1</fullName>
    </alternativeName>
    <alternativeName>
        <fullName evidence="29">p97/CDC48 homolog 1</fullName>
    </alternativeName>
</protein>
<dbReference type="EC" id="3.6.4.6" evidence="13 14 19"/>
<dbReference type="EMBL" id="Z49886">
    <property type="protein sequence ID" value="CAA90050.1"/>
    <property type="molecule type" value="Genomic_DNA"/>
</dbReference>
<dbReference type="PIR" id="T18970">
    <property type="entry name" value="T18970"/>
</dbReference>
<dbReference type="RefSeq" id="NP_496273.1">
    <property type="nucleotide sequence ID" value="NM_063872.6"/>
</dbReference>
<dbReference type="SMR" id="P54811"/>
<dbReference type="BioGRID" id="39940">
    <property type="interactions" value="39"/>
</dbReference>
<dbReference type="DIP" id="DIP-26650N"/>
<dbReference type="FunCoup" id="P54811">
    <property type="interactions" value="2522"/>
</dbReference>
<dbReference type="IntAct" id="P54811">
    <property type="interactions" value="8"/>
</dbReference>
<dbReference type="STRING" id="6239.C06A1.1.1"/>
<dbReference type="PaxDb" id="6239-C06A1.1"/>
<dbReference type="PeptideAtlas" id="P54811"/>
<dbReference type="EnsemblMetazoa" id="C06A1.1.1">
    <property type="protein sequence ID" value="C06A1.1.1"/>
    <property type="gene ID" value="WBGene00007352"/>
</dbReference>
<dbReference type="GeneID" id="174624"/>
<dbReference type="KEGG" id="cel:CELE_C06A1.1"/>
<dbReference type="UCSC" id="C06A1.1.1">
    <property type="organism name" value="c. elegans"/>
</dbReference>
<dbReference type="AGR" id="WB:WBGene00007352"/>
<dbReference type="CTD" id="174624"/>
<dbReference type="WormBase" id="C06A1.1">
    <property type="protein sequence ID" value="CE02114"/>
    <property type="gene ID" value="WBGene00007352"/>
    <property type="gene designation" value="cdc-48.1"/>
</dbReference>
<dbReference type="eggNOG" id="KOG0730">
    <property type="taxonomic scope" value="Eukaryota"/>
</dbReference>
<dbReference type="GeneTree" id="ENSGT00970000196377"/>
<dbReference type="HOGENOM" id="CLU_000688_12_3_1"/>
<dbReference type="InParanoid" id="P54811"/>
<dbReference type="OMA" id="VWPAYPE"/>
<dbReference type="OrthoDB" id="27435at2759"/>
<dbReference type="PhylomeDB" id="P54811"/>
<dbReference type="PRO" id="PR:P54811"/>
<dbReference type="Proteomes" id="UP000001940">
    <property type="component" value="Chromosome II"/>
</dbReference>
<dbReference type="Bgee" id="WBGene00007352">
    <property type="expression patterns" value="Expressed in adult organism and 3 other cell types or tissues"/>
</dbReference>
<dbReference type="GO" id="GO:0005737">
    <property type="term" value="C:cytoplasm"/>
    <property type="evidence" value="ECO:0000314"/>
    <property type="project" value="WormBase"/>
</dbReference>
<dbReference type="GO" id="GO:0005829">
    <property type="term" value="C:cytosol"/>
    <property type="evidence" value="ECO:0000318"/>
    <property type="project" value="GO_Central"/>
</dbReference>
<dbReference type="GO" id="GO:0005654">
    <property type="term" value="C:nucleoplasm"/>
    <property type="evidence" value="ECO:0000314"/>
    <property type="project" value="WormBase"/>
</dbReference>
<dbReference type="GO" id="GO:0005634">
    <property type="term" value="C:nucleus"/>
    <property type="evidence" value="ECO:0000314"/>
    <property type="project" value="WormBase"/>
</dbReference>
<dbReference type="GO" id="GO:0048471">
    <property type="term" value="C:perinuclear region of cytoplasm"/>
    <property type="evidence" value="ECO:0000314"/>
    <property type="project" value="WormBase"/>
</dbReference>
<dbReference type="GO" id="GO:0034098">
    <property type="term" value="C:VCP-NPL4-UFD1 AAA ATPase complex"/>
    <property type="evidence" value="ECO:0000314"/>
    <property type="project" value="UniProtKB"/>
</dbReference>
<dbReference type="GO" id="GO:0005524">
    <property type="term" value="F:ATP binding"/>
    <property type="evidence" value="ECO:0007669"/>
    <property type="project" value="UniProtKB-KW"/>
</dbReference>
<dbReference type="GO" id="GO:0016887">
    <property type="term" value="F:ATP hydrolysis activity"/>
    <property type="evidence" value="ECO:0000314"/>
    <property type="project" value="WormBase"/>
</dbReference>
<dbReference type="GO" id="GO:0042802">
    <property type="term" value="F:identical protein binding"/>
    <property type="evidence" value="ECO:0000353"/>
    <property type="project" value="IntAct"/>
</dbReference>
<dbReference type="GO" id="GO:0031593">
    <property type="term" value="F:polyubiquitin modification-dependent protein binding"/>
    <property type="evidence" value="ECO:0000318"/>
    <property type="project" value="GO_Central"/>
</dbReference>
<dbReference type="GO" id="GO:0044877">
    <property type="term" value="F:protein-containing complex binding"/>
    <property type="evidence" value="ECO:0000314"/>
    <property type="project" value="UniProtKB"/>
</dbReference>
<dbReference type="GO" id="GO:0097352">
    <property type="term" value="P:autophagosome maturation"/>
    <property type="evidence" value="ECO:0000318"/>
    <property type="project" value="GO_Central"/>
</dbReference>
<dbReference type="GO" id="GO:0009792">
    <property type="term" value="P:embryo development ending in birth or egg hatching"/>
    <property type="evidence" value="ECO:0000316"/>
    <property type="project" value="WormBase"/>
</dbReference>
<dbReference type="GO" id="GO:0036503">
    <property type="term" value="P:ERAD pathway"/>
    <property type="evidence" value="ECO:0000316"/>
    <property type="project" value="WormBase"/>
</dbReference>
<dbReference type="GO" id="GO:0051228">
    <property type="term" value="P:mitotic spindle disassembly"/>
    <property type="evidence" value="ECO:0000318"/>
    <property type="project" value="GO_Central"/>
</dbReference>
<dbReference type="GO" id="GO:0045977">
    <property type="term" value="P:positive regulation of mitotic cell cycle, embryonic"/>
    <property type="evidence" value="ECO:0000316"/>
    <property type="project" value="UniProtKB"/>
</dbReference>
<dbReference type="GO" id="GO:0032436">
    <property type="term" value="P:positive regulation of proteasomal ubiquitin-dependent protein catabolic process"/>
    <property type="evidence" value="ECO:0000315"/>
    <property type="project" value="UniProtKB"/>
</dbReference>
<dbReference type="GO" id="GO:0043161">
    <property type="term" value="P:proteasome-mediated ubiquitin-dependent protein catabolic process"/>
    <property type="evidence" value="ECO:0000318"/>
    <property type="project" value="GO_Central"/>
</dbReference>
<dbReference type="GO" id="GO:1905634">
    <property type="term" value="P:regulation of protein localization to chromatin"/>
    <property type="evidence" value="ECO:0000316"/>
    <property type="project" value="UniProtKB"/>
</dbReference>
<dbReference type="GO" id="GO:0030970">
    <property type="term" value="P:retrograde protein transport, ER to cytosol"/>
    <property type="evidence" value="ECO:0000318"/>
    <property type="project" value="GO_Central"/>
</dbReference>
<dbReference type="CDD" id="cd19519">
    <property type="entry name" value="RecA-like_CDC48_r1-like"/>
    <property type="match status" value="1"/>
</dbReference>
<dbReference type="CDD" id="cd19528">
    <property type="entry name" value="RecA-like_CDC48_r2-like"/>
    <property type="match status" value="1"/>
</dbReference>
<dbReference type="FunFam" id="1.10.8.60:FF:000004">
    <property type="entry name" value="Cell division control 48"/>
    <property type="match status" value="1"/>
</dbReference>
<dbReference type="FunFam" id="3.10.330.10:FF:000001">
    <property type="entry name" value="Cell division control 48"/>
    <property type="match status" value="1"/>
</dbReference>
<dbReference type="FunFam" id="2.40.40.20:FF:000003">
    <property type="entry name" value="Transitional endoplasmic reticulum ATPase"/>
    <property type="match status" value="1"/>
</dbReference>
<dbReference type="FunFam" id="3.40.50.300:FF:000012">
    <property type="entry name" value="Transitional endoplasmic reticulum ATPase"/>
    <property type="match status" value="1"/>
</dbReference>
<dbReference type="FunFam" id="3.40.50.300:FF:000048">
    <property type="entry name" value="Transitional endoplasmic reticulum ATPase"/>
    <property type="match status" value="1"/>
</dbReference>
<dbReference type="Gene3D" id="1.10.8.60">
    <property type="match status" value="1"/>
</dbReference>
<dbReference type="Gene3D" id="2.40.40.20">
    <property type="match status" value="1"/>
</dbReference>
<dbReference type="Gene3D" id="3.10.330.10">
    <property type="match status" value="1"/>
</dbReference>
<dbReference type="Gene3D" id="6.10.20.150">
    <property type="match status" value="1"/>
</dbReference>
<dbReference type="Gene3D" id="3.40.50.300">
    <property type="entry name" value="P-loop containing nucleotide triphosphate hydrolases"/>
    <property type="match status" value="2"/>
</dbReference>
<dbReference type="InterPro" id="IPR003593">
    <property type="entry name" value="AAA+_ATPase"/>
</dbReference>
<dbReference type="InterPro" id="IPR005938">
    <property type="entry name" value="AAA_ATPase_CDC48"/>
</dbReference>
<dbReference type="InterPro" id="IPR050168">
    <property type="entry name" value="AAA_ATPase_domain"/>
</dbReference>
<dbReference type="InterPro" id="IPR041569">
    <property type="entry name" value="AAA_lid_3"/>
</dbReference>
<dbReference type="InterPro" id="IPR009010">
    <property type="entry name" value="Asp_de-COase-like_dom_sf"/>
</dbReference>
<dbReference type="InterPro" id="IPR003959">
    <property type="entry name" value="ATPase_AAA_core"/>
</dbReference>
<dbReference type="InterPro" id="IPR003960">
    <property type="entry name" value="ATPase_AAA_CS"/>
</dbReference>
<dbReference type="InterPro" id="IPR004201">
    <property type="entry name" value="Cdc48_dom2"/>
</dbReference>
<dbReference type="InterPro" id="IPR029067">
    <property type="entry name" value="CDC48_domain_2-like_sf"/>
</dbReference>
<dbReference type="InterPro" id="IPR003338">
    <property type="entry name" value="CDC4_N-term_subdom"/>
</dbReference>
<dbReference type="InterPro" id="IPR027417">
    <property type="entry name" value="P-loop_NTPase"/>
</dbReference>
<dbReference type="InterPro" id="IPR015415">
    <property type="entry name" value="Spast_Vps4_C"/>
</dbReference>
<dbReference type="NCBIfam" id="TIGR01243">
    <property type="entry name" value="CDC48"/>
    <property type="match status" value="1"/>
</dbReference>
<dbReference type="PANTHER" id="PTHR23077">
    <property type="entry name" value="AAA-FAMILY ATPASE"/>
    <property type="match status" value="1"/>
</dbReference>
<dbReference type="PANTHER" id="PTHR23077:SF52">
    <property type="entry name" value="TRANSITIONAL ENDOPLASMIC RETICULUM ATPASE HOMOLOG 1"/>
    <property type="match status" value="1"/>
</dbReference>
<dbReference type="Pfam" id="PF00004">
    <property type="entry name" value="AAA"/>
    <property type="match status" value="2"/>
</dbReference>
<dbReference type="Pfam" id="PF17862">
    <property type="entry name" value="AAA_lid_3"/>
    <property type="match status" value="2"/>
</dbReference>
<dbReference type="Pfam" id="PF02933">
    <property type="entry name" value="CDC48_2"/>
    <property type="match status" value="1"/>
</dbReference>
<dbReference type="Pfam" id="PF02359">
    <property type="entry name" value="CDC48_N"/>
    <property type="match status" value="1"/>
</dbReference>
<dbReference type="Pfam" id="PF09336">
    <property type="entry name" value="Vps4_C"/>
    <property type="match status" value="1"/>
</dbReference>
<dbReference type="SMART" id="SM00382">
    <property type="entry name" value="AAA"/>
    <property type="match status" value="2"/>
</dbReference>
<dbReference type="SMART" id="SM01072">
    <property type="entry name" value="CDC48_2"/>
    <property type="match status" value="1"/>
</dbReference>
<dbReference type="SMART" id="SM01073">
    <property type="entry name" value="CDC48_N"/>
    <property type="match status" value="1"/>
</dbReference>
<dbReference type="SUPFAM" id="SSF50692">
    <property type="entry name" value="ADC-like"/>
    <property type="match status" value="1"/>
</dbReference>
<dbReference type="SUPFAM" id="SSF54585">
    <property type="entry name" value="Cdc48 domain 2-like"/>
    <property type="match status" value="1"/>
</dbReference>
<dbReference type="SUPFAM" id="SSF52540">
    <property type="entry name" value="P-loop containing nucleoside triphosphate hydrolases"/>
    <property type="match status" value="2"/>
</dbReference>
<dbReference type="PROSITE" id="PS00674">
    <property type="entry name" value="AAA"/>
    <property type="match status" value="2"/>
</dbReference>
<feature type="chain" id="PRO_0000084577" description="Transitional endoplasmic reticulum ATPase homolog 1">
    <location>
        <begin position="1"/>
        <end position="809"/>
    </location>
</feature>
<feature type="region of interest" description="Disordered" evidence="3">
    <location>
        <begin position="1"/>
        <end position="21"/>
    </location>
</feature>
<feature type="region of interest" description="Disordered" evidence="3">
    <location>
        <begin position="779"/>
        <end position="809"/>
    </location>
</feature>
<feature type="region of interest" description="Interaction with ufd-2" evidence="7 18">
    <location>
        <begin position="803"/>
        <end position="809"/>
    </location>
</feature>
<feature type="compositionally biased region" description="Basic and acidic residues" evidence="3">
    <location>
        <begin position="8"/>
        <end position="21"/>
    </location>
</feature>
<feature type="binding site" evidence="1">
    <location>
        <begin position="253"/>
        <end position="259"/>
    </location>
    <ligand>
        <name>ATP</name>
        <dbReference type="ChEBI" id="CHEBI:30616"/>
        <label>1</label>
    </ligand>
</feature>
<feature type="binding site" evidence="1">
    <location>
        <position position="354"/>
    </location>
    <ligand>
        <name>ATP</name>
        <dbReference type="ChEBI" id="CHEBI:30616"/>
        <label>1</label>
    </ligand>
</feature>
<feature type="binding site" evidence="1">
    <location>
        <position position="390"/>
    </location>
    <ligand>
        <name>ATP</name>
        <dbReference type="ChEBI" id="CHEBI:30616"/>
        <label>1</label>
    </ligand>
</feature>
<feature type="binding site" evidence="2">
    <location>
        <begin position="527"/>
        <end position="532"/>
    </location>
    <ligand>
        <name>ATP</name>
        <dbReference type="ChEBI" id="CHEBI:30616"/>
        <label>2</label>
    </ligand>
</feature>
<feature type="mutagenesis site" description="Loss of ATP binding. Complete loss of catalytic activity. Complete loss of catalytic activity without affecting oligomerization; when associated with A-365 and A-530." evidence="13 19">
    <original>K</original>
    <variation>A</variation>
    <location>
        <position position="257"/>
    </location>
</feature>
<feature type="mutagenesis site" description="Loss of ATP binding. Complete loss of catalytic activity." evidence="19">
    <original>K</original>
    <variation>T</variation>
    <location>
        <position position="257"/>
    </location>
</feature>
<feature type="mutagenesis site" description="Severe loss of ATP hydrolysis without affecting ATP binding." evidence="19">
    <original>E</original>
    <variation>D</variation>
    <location>
        <position position="311"/>
    </location>
</feature>
<feature type="mutagenesis site" description="Severe loss of ATP hydrolysis without affecting ATP binding and moderate reduction in cooperativity between the 2 ATP-binding regions." evidence="19">
    <original>E</original>
    <variation>N</variation>
    <variation>A</variation>
    <location>
        <position position="311"/>
    </location>
</feature>
<feature type="mutagenesis site" description="Severe loss of ATP hydrolysis without affecting ATP binding and loss of cooperativity between the 2 ATP-binding regions. Slight reduction in catalytic activity; when associated with A-354, A-365, A-467, S-467 or P-467. Complete loss of catalytic activity; when associated with Q-584. Restores normal catalytic activity; when associated with H-471." evidence="19">
    <original>E</original>
    <variation>Q</variation>
    <location>
        <position position="311"/>
    </location>
</feature>
<feature type="mutagenesis site" description="Slight reduction in catalytic activity. Slight reduction in catalytic activity; when associated with Q-311. Complete loss of catalytic activity; when associated with A-631." evidence="19">
    <original>N</original>
    <variation>A</variation>
    <location>
        <position position="354"/>
    </location>
</feature>
<feature type="mutagenesis site" description="Slight reduction in catalytic activity. Slight reduction in catalytic activity; when associated with Q-311. Complete loss of catalytic activity; when associated with A-257 or A-642. Does not affect oligomerization; when associated with A-257." evidence="19">
    <original>R</original>
    <variation>A</variation>
    <location>
        <position position="365"/>
    </location>
</feature>
<feature type="mutagenesis site" description="Slight reduction in catalytic activity; when associated with Q-311." evidence="19">
    <original>P</original>
    <variation>A</variation>
    <variation>S</variation>
    <location>
        <position position="467"/>
    </location>
</feature>
<feature type="mutagenesis site" description="Restores normal catalytic activity; when associated with Q-311." evidence="19">
    <original>R</original>
    <variation>H</variation>
    <location>
        <position position="471"/>
    </location>
</feature>
<feature type="mutagenesis site" description="Loss of ATP binding and impaired rotation between the two ATP-binding regions in the hexamer. Complete loss of catalytic activity. Complete loss of catalytic activity without affecting oligomerization; when associated with A-257." evidence="13 19 23">
    <original>K</original>
    <variation>A</variation>
    <location>
        <position position="530"/>
    </location>
</feature>
<feature type="mutagenesis site" description="Complete loss of catalytic activity." evidence="19">
    <original>K</original>
    <variation>T</variation>
    <location>
        <position position="530"/>
    </location>
</feature>
<feature type="mutagenesis site" description="Severe loss of ATP hydrolysis without affecting ATP binding." evidence="19">
    <original>E</original>
    <variation>D</variation>
    <location>
        <position position="584"/>
    </location>
</feature>
<feature type="mutagenesis site" description="Severe loss of ATP hydrolysis without affecting ATP binding. Does not affect rotation between the 2 ATP-binding regions in the hexamer in presence of ATP or ADP. Complete loss of catalytic activity; when associated with Q-311." evidence="19 23">
    <original>E</original>
    <variation>Q</variation>
    <location>
        <position position="584"/>
    </location>
</feature>
<feature type="mutagenesis site" description="Severe reduction in catalytic activity. Complete loss of catalytic activity; when associated with A-354." evidence="19">
    <original>N</original>
    <variation>A</variation>
    <location>
        <position position="631"/>
    </location>
</feature>
<feature type="mutagenesis site" description="Severe reduction in catalytic activity. Complete loss of catalytic activity; when associated with A-365." evidence="19">
    <original>R</original>
    <variation>A</variation>
    <location>
        <position position="642"/>
    </location>
</feature>
<feature type="mutagenesis site" description="Loss of interaction with ufd-2 but not with atx-3." evidence="7 18">
    <location>
        <begin position="804"/>
        <end position="809"/>
    </location>
</feature>
<evidence type="ECO:0000250" key="1">
    <source>
        <dbReference type="UniProtKB" id="P55072"/>
    </source>
</evidence>
<evidence type="ECO:0000250" key="2">
    <source>
        <dbReference type="UniProtKB" id="Q01853"/>
    </source>
</evidence>
<evidence type="ECO:0000256" key="3">
    <source>
        <dbReference type="SAM" id="MobiDB-lite"/>
    </source>
</evidence>
<evidence type="ECO:0000269" key="4">
    <source>
    </source>
</evidence>
<evidence type="ECO:0000269" key="5">
    <source>
    </source>
</evidence>
<evidence type="ECO:0000269" key="6">
    <source>
    </source>
</evidence>
<evidence type="ECO:0000269" key="7">
    <source>
    </source>
</evidence>
<evidence type="ECO:0000269" key="8">
    <source>
    </source>
</evidence>
<evidence type="ECO:0000269" key="9">
    <source>
    </source>
</evidence>
<evidence type="ECO:0000269" key="10">
    <source>
    </source>
</evidence>
<evidence type="ECO:0000269" key="11">
    <source>
    </source>
</evidence>
<evidence type="ECO:0000269" key="12">
    <source>
    </source>
</evidence>
<evidence type="ECO:0000269" key="13">
    <source>
    </source>
</evidence>
<evidence type="ECO:0000269" key="14">
    <source>
    </source>
</evidence>
<evidence type="ECO:0000269" key="15">
    <source>
    </source>
</evidence>
<evidence type="ECO:0000269" key="16">
    <source>
    </source>
</evidence>
<evidence type="ECO:0000269" key="17">
    <source>
    </source>
</evidence>
<evidence type="ECO:0000269" key="18">
    <source>
    </source>
</evidence>
<evidence type="ECO:0000269" key="19">
    <source>
    </source>
</evidence>
<evidence type="ECO:0000269" key="20">
    <source>
    </source>
</evidence>
<evidence type="ECO:0000269" key="21">
    <source>
    </source>
</evidence>
<evidence type="ECO:0000269" key="22">
    <source>
    </source>
</evidence>
<evidence type="ECO:0000269" key="23">
    <source>
    </source>
</evidence>
<evidence type="ECO:0000269" key="24">
    <source>
    </source>
</evidence>
<evidence type="ECO:0000269" key="25">
    <source>
    </source>
</evidence>
<evidence type="ECO:0000269" key="26">
    <source>
    </source>
</evidence>
<evidence type="ECO:0000269" key="27">
    <source>
    </source>
</evidence>
<evidence type="ECO:0000269" key="28">
    <source>
    </source>
</evidence>
<evidence type="ECO:0000305" key="29"/>
<evidence type="ECO:0000312" key="30">
    <source>
        <dbReference type="WormBase" id="C06A1.1"/>
    </source>
</evidence>
<keyword id="KW-0067">ATP-binding</keyword>
<keyword id="KW-0143">Chaperone</keyword>
<keyword id="KW-0963">Cytoplasm</keyword>
<keyword id="KW-0378">Hydrolase</keyword>
<keyword id="KW-0547">Nucleotide-binding</keyword>
<keyword id="KW-1185">Reference proteome</keyword>
<keyword id="KW-0677">Repeat</keyword>
<accession>P54811</accession>
<gene>
    <name evidence="30" type="primary">cdc-48.1</name>
    <name evidence="30" type="ORF">C06A1.1</name>
</gene>
<comment type="function">
    <text evidence="5 7 8 9 10 11 12 13 14 15 16 18 20 21 24 26 28">ATP-dependent chaperone which probably uses the energy provided by ATP hydrolysis to generate mechanical force to unfold substrate proteins, disassemble protein complexes, and disaggregate protein aggregates (PubMed:18782221, PubMed:18854144, PubMed:22768338). Can also prevent aggregation of unfolded proteins also in an ATP-independent manner (PubMed:18782221). Targets polyubiquitinated proteins for proteasomal degradation by binding to 'Lys-48'-linked polyubiquitin chains (PubMed:19545544). Involved in the cytoplasmic elimination of misfolded proteins exported from the ER (PubMed:16647269, PubMed:17825049, PubMed:21317884, PubMed:22768338, PubMed:25652260). This pathway, known as ERAD, prevents the activation of the unfolded protein response (UPR) caused by the accumulation of misfolded proteins in the ER (PubMed:16647269, PubMed:17825049, PubMed:21317884, PubMed:22768338, PubMed:25652260). In association with helicase him-6 and GTPase crp-1, regulates the unfolded protein response (UPR) following ER stress, probably independently of the ERAD pathway (PubMed:18458060). Together with udf-2 and chn-1, regulates myosin assembly in body wall muscles by targeting myosin chaperone unc-45 for proteasomal degradation (PubMed:17369820). Together with the ufd-1-npl-4 complex, controls the switch from spermatogenesis to oogenesis by regulating E3 ligase cul-2 complex-mediated tra-1 proteasomal degradation (PubMed:19773360). During oocyte meiosis and together with cdc-48.2, required for chromosome condensation at the diakinesis phase in prophase I and for progression of metaphase I (PubMed:17512499). During the first embryonic cell division, regulates DNA replication and thus chromosome segregation and decondensation, and nuclear envelope re-assembly (PubMed:18097415, PubMed:18728180, PubMed:18854144, PubMed:21981920, PubMed:26842564, PubMed:28368371). In S phase and in association with ufd-1, npl-4.1 and/or npl-4.2 and ubxn-3, ensures the degradation of DNA licensing factor cdt-1 after the initiation of DNA replication and thus the disassembly of the DNA replication CMG helicase complex by promoting the dissociation from chromatin of several of its components including cdc-45 and sld-5 (PubMed:21981920, PubMed:26842564, PubMed:28368371). Regulates ubxn-3 nuclear localization during S phase (PubMed:26842564). During the first embryonic cell divisions and together with cdc-48.2, regulates the re-assembly of the nuclear envelope after mitosis possibly by inactivating kinase air-2, a component of the chromosomal passenger complex (CPC) (PubMed:18097415). However, in another study, cdc-48.1 does not appear to be implicated in the regulation of air-2 (PubMed:18854144).</text>
</comment>
<comment type="catalytic activity">
    <reaction evidence="13 14 19">
        <text>ATP + H2O = ADP + phosphate + H(+)</text>
        <dbReference type="Rhea" id="RHEA:13065"/>
        <dbReference type="ChEBI" id="CHEBI:15377"/>
        <dbReference type="ChEBI" id="CHEBI:15378"/>
        <dbReference type="ChEBI" id="CHEBI:30616"/>
        <dbReference type="ChEBI" id="CHEBI:43474"/>
        <dbReference type="ChEBI" id="CHEBI:456216"/>
        <dbReference type="EC" id="3.6.4.6"/>
    </reaction>
</comment>
<comment type="activity regulation">
    <text evidence="13 19 23">The first ATP-binding region has low ATPase activity (PubMed:21454554). The second ATP-binding region is responsible for ATPase activity (PubMed:21454554). ATP binding to the first ATP-binding region induces intrinsic activity of the second ATP-binding region (PubMed:21454554). While ATP binding to the first ATP-binding region appears to prevent ATP hydrolysis by the second ATP-binding region, ADP-binding to first region promotes the coordinate and cooperative ATPase cycle of the second ATP-binding region (PubMed:21454554). ATP binding to the first ATP-binding region induces a conformational change, promoting the rotation of the first ATP-binding region relative to the second ATP-binding region in the hexamer (PubMed:24055316). Inhibited by N-ethylmaleimide (NEM) (PubMed:18782221).</text>
</comment>
<comment type="biophysicochemical properties">
    <kinetics>
        <KM evidence="19">0.39 mM for ATP (at 30 degrees Celsius)</KM>
    </kinetics>
</comment>
<comment type="subunit">
    <text evidence="5 7 11 13 14 15 17 18 22 23 25 26 27">Homohexamer; oligomerization is ATP-independent (PubMed:18782221, PubMed:24055316). Forms a ring-shaped particle of 18.3 nm diameter, that displays 6-fold radial symmetry (PubMed:24055316). Interacts with cdc-48.2 and thus may form heterohexamers (PubMed:16647269, PubMed:17369820, PubMed:25721663). Forms a complex composed of cdc-48.1, him-6 and crp-1; within the complex, interacts with helicase him-6 and GTPase crp-1 (PubMed:18458060). Forms a complex composed of deubiquitinating enzyme atx-3, adapter ubxn-5 and cdc-48.1; within the complex, interacts (via N-terminus) with ubxn-5 and with atx-3 (PubMed:19545544). Forms a complex composed of deubiquitinating enzyme atx-3, E4 ubiquitin-protein ligase ufd-2 and cdc-48.1; within the complex, interacts with atx-3 and (via DDDLYN motif) with ufd-2 (PubMed:21317884, PubMed:27669035). Interacts (via N-terminus) with atx-3 (via RRDR motif); the interaction is not required for atx-3 enzymatic activity (PubMed:19545544, PubMed:21317884). Forms a complex composed of cdc-48.1, myosin chaperone unc-45, ubiquitin-protein ligases ufd-2 and chn-1; within the complex, interacts (via DDDLYN motif) with ufd-2 and targets myosin chaperone unc-45 for proteasomal degradation (PubMed:17369820, PubMed:27669035). Forms a complex composed of ubxn-3, ufd-1, npl-4.1 and cdc-48.1; within the complex, interacts (via N-terminus) with ubxn-3 (via FPK motif) and with ufd-1 (PubMed:16647269, PubMed:20977550). Forms a complex composed of ubxn-3, cdc-48.1 and/or cdc-48.2 and substrate cdt-1 (PubMed:26842564). Interacts (via N-terminus) with ubxn-1 (PubMed:16647269, PubMed:20977550). Interacts (via N-terminus) with ubxn-2 (PubMed:20977550, PubMed:23649807). Interacts (via N-terminus) with ubxn-4 (PubMed:20977550). Interacts with ubxn-6 (PubMed:20977550). Interacts with ufd-3 (PubMed:25721663). Does not interact with air-2 (PubMed:18854144).</text>
</comment>
<comment type="interaction">
    <interactant intactId="EBI-320245">
        <id>P54811</id>
    </interactant>
    <interactant intactId="EBI-320245">
        <id>P54811</id>
        <label>cdc-48.1</label>
    </interactant>
    <organismsDiffer>false</organismsDiffer>
    <experiments>2</experiments>
</comment>
<comment type="interaction">
    <interactant intactId="EBI-320245">
        <id>P54811</id>
    </interactant>
    <interactant intactId="EBI-320265">
        <id>P54812</id>
        <label>cdc-48.2</label>
    </interactant>
    <organismsDiffer>false</organismsDiffer>
    <experiments>6</experiments>
</comment>
<comment type="interaction">
    <interactant intactId="EBI-320245">
        <id>P54811</id>
    </interactant>
    <interactant intactId="EBI-320236">
        <id>Q9TXH9</id>
        <label>ubxn-1</label>
    </interactant>
    <organismsDiffer>false</organismsDiffer>
    <experiments>3</experiments>
</comment>
<comment type="subcellular location">
    <subcellularLocation>
        <location evidence="17 25">Cytoplasm</location>
        <location evidence="17 25">Perinuclear region</location>
    </subcellularLocation>
    <subcellularLocation>
        <location evidence="7">Cytoplasm</location>
    </subcellularLocation>
    <text evidence="17 25">Colocalizes with ubxn-1, ubxn-2 and ubxn-3 to the perinuclear region in spermatocytes (PubMed:20977550). Localizes to the perinuclear region in intestinal cells (PubMed:25721663).</text>
</comment>
<comment type="tissue specificity">
    <text evidence="6 7">Expressed in germ cells and spermatheca (PubMed:16701565). Expressed in body wall muscles (PubMed:17369820).</text>
</comment>
<comment type="developmental stage">
    <text evidence="6 7 16">Expressed highly in embryos (at protein level) (PubMed:16701565, PubMed:17369820). Expression decreases in larvae and increases again in adults (at protein level) (PubMed:16701565, PubMed:17369820). At the L4 larval stage, expressed in the proximal gonad, predominantly at the pachytene stage and in spermatocytes (PubMed:19773360). Not expressed in sperm (PubMed:19773360).</text>
</comment>
<comment type="induction">
    <text evidence="6">Induced upon ER stress. Repressed by starvation and oxidative stress.</text>
</comment>
<comment type="disruption phenotype">
    <text evidence="4 5 7 8 9 10 11 12 14 17 18 20 21 26 28">RNAi-mediated knockdown causes partial embryonic lethality (PubMed:15716356, PubMed:18854144). Impairs response to ER stress (PubMed:18458060). Abnormal accumulation of myosin chaperone unc-45 in body wall muscles (PubMed:17369820). RNAi-mediated knockdown in an unc-45 (m94) mutant background, restores motility (PubMed:17369820). Simultaneous RNAi-mediated knockdown of cdc-48.2 in embryos causes embryonic lethality (PubMed:15716356, PubMed:16647269, PubMed:18097415, PubMed:18728180, PubMed:18854144). Defects in oocyte meiosis I progression (PubMed:17512499). Defects in embryo S phase DNA replication causing delays in cell cycle progression (PubMed:17512499, PubMed:18728180, PubMed:21981920, PubMed:26842564, PubMed:28368371). At the end of mitosis, impairs chromatin decondensation and nuclear envelope re-assembly (PubMed:18097415, PubMed:18728180, PubMed:18854144). In addition, abnormal accumulation of air-2 on mitotic chromatin and impaired air-2 activation (PubMed:18097415). Does not affect ER transition into sheet-like structures at the onset of embryonic mitosis (PubMed:15716356). Simultaneous RNAi-mediated knockdown of cdc-48.2 in young adults decreases lifespan, induces the unfolded protein response, increases overall levels of polyubiquitinated proteins, and impairs the degradation of misfolded ER proteins (PubMed:16647269, PubMed:17369820, PubMed:17825049, PubMed:21317884, PubMed:22768338). Causes defects in germline development (PubMed:20977550). In an atx-3 (gk193) mutant background, causes a 50 percent increase in longevity, a delay in age-related muscle degeneration and resistance to oxidative and heat stresses (PubMed:21317884).</text>
</comment>
<comment type="similarity">
    <text evidence="29">Belongs to the AAA ATPase family. CDC48 subfamily.</text>
</comment>
<comment type="caution">
    <text evidence="10 14">The role of cdc-48.1 in the regulation of kinase air-2, a component of the chromosomal passenger complex (CPC), is controversial. One study suggests that cdc-48.1 inactivates air-2 at the end of mitosis whereas a second study shows that cdc-48.1 is not implicated in the regulation of air-2.</text>
</comment>
<name>TERA1_CAEEL</name>
<sequence>MASVPTHQSEKEKKNDELSTAILKDKVKPNRLIVDQSEQDDNSVIAVSQAKMDELGLFRGDAVILKGKKRKESVAIIVSDESCPNEKVRMNRVVRNNLRIRLGDVVSITPAPNLSYGTRIHVLPIDDTIEGLTGNLFDVFLKPYFLEAYRPLHKGDIFTVQAAMRTVEFKVVETEPAPACIVSPDTMIHYEGDPIKREEEEESMNDIGYDDLGGVRKQLAQIKEMVELPLRHPQLFKAIGIKPPRGILLFGPPGTGKTLIARAVANETGSFFFLINGPEVMSKMSGESESNLRKAFEECEKNQPAILFIDEIDAIAPKREKTNGEVERRIVSQLLTLMDGVKGRSNLVVIAATNRPNSIDGALRRFGRFDREIDIGIPDAVGRLEILRIHTKNMKLADDVDLEQIANECHGFVGADLASLCSEAALQQIREKMELIDLEDDQIDAEVLNSLAVTMENFRFAQGKSSPSALREAVVETPNTTWSDIGGLQNVKRELQELVQYPVEHPEKYLKFGMQPSRGVLFYGPPGCGKTLLAKAIANECQANFISIKGPELLTMWFGESEANVRDVFDKARAAAPCVLFFDELDSIAKARGGGAGGDGGGASDRVINQVLTEMDGMNAKKNVFIIGATNRPDIIDPAVLRPGRLDQLIYIPLPDEASRHQILKASLRKTPLSKDLDLTFLAKNTVGFSGADLTEICQRACKLAIRESIEKEIRIEKERQDRQARGEELMEDDAVDPVPEITRAHFEEAMKFARRSVTDNDIRKYEMFAQTLQQSRGFGNNFKFPGEQRGSDAPSAPVPAQDDDDLYN</sequence>
<reference key="1">
    <citation type="journal article" date="1998" name="Science">
        <title>Genome sequence of the nematode C. elegans: a platform for investigating biology.</title>
        <authorList>
            <consortium name="The C. elegans sequencing consortium"/>
        </authorList>
    </citation>
    <scope>NUCLEOTIDE SEQUENCE [LARGE SCALE GENOMIC DNA]</scope>
    <source>
        <strain>Bristol N2</strain>
    </source>
</reference>
<reference key="2">
    <citation type="journal article" date="2005" name="Mol. Biol. Cell">
        <title>Involvement of the actin cytoskeleton and homotypic membrane fusion in ER dynamics in Caenorhabditis elegans.</title>
        <authorList>
            <person name="Poteryaev D."/>
            <person name="Squirrell J.M."/>
            <person name="Campbell J.M."/>
            <person name="White J.G."/>
            <person name="Spang A."/>
        </authorList>
    </citation>
    <scope>DISRUPTION PHENOTYPE</scope>
</reference>
<reference key="3">
    <citation type="journal article" date="2006" name="Biochem. Biophys. Res. Commun.">
        <title>Comparative analysis of expression of two p97 homologues in Caenorhabditis elegans.</title>
        <authorList>
            <person name="Yamauchi S."/>
            <person name="Yamanaka K."/>
            <person name="Ogura T."/>
        </authorList>
    </citation>
    <scope>TISSUE SPECIFICITY</scope>
    <scope>DEVELOPMENTAL STAGE</scope>
    <scope>INDUCTION</scope>
</reference>
<reference key="4">
    <citation type="journal article" date="2006" name="J. Struct. Biol.">
        <title>A conserved role of Caenorhabditis elegans CDC-48 in ER-associated protein degradation.</title>
        <authorList>
            <person name="Mouysset J."/>
            <person name="Kaehler C."/>
            <person name="Hoppe T."/>
        </authorList>
    </citation>
    <scope>FUNCTION</scope>
    <scope>INTERACTION WITH CDC-48.2; UFD-1 AND UBXN-1</scope>
    <scope>DISRUPTION PHENOTYPE</scope>
</reference>
<reference key="5">
    <citation type="journal article" date="2007" name="Biochem. Biophys. Res. Commun.">
        <title>Caenorhabditis elegans p97/CDC-48 is crucial for progression of meiosis I.</title>
        <authorList>
            <person name="Sasagawa Y."/>
            <person name="Yamanaka K."/>
            <person name="Nishikori S."/>
            <person name="Ogura T."/>
        </authorList>
    </citation>
    <scope>FUNCTION</scope>
    <scope>DISRUPTION PHENOTYPE</scope>
</reference>
<reference key="6">
    <citation type="journal article" date="2007" name="Genes Cells">
        <title>ER E3 ubiquitin ligase HRD-1 and its specific partner chaperone BiP play important roles in ERAD and developmental growth in Caenorhabditis elegans.</title>
        <authorList>
            <person name="Sasagawa Y."/>
            <person name="Yamanaka K."/>
            <person name="Ogura T."/>
        </authorList>
    </citation>
    <scope>FUNCTION</scope>
    <scope>DISRUPTION PHENOTYPE</scope>
</reference>
<reference key="7">
    <citation type="journal article" date="2007" name="Nature">
        <title>Cdc48/p97 promotes reformation of the nucleus by extracting the kinase Aurora B from chromatin.</title>
        <authorList>
            <person name="Ramadan K."/>
            <person name="Bruderer R."/>
            <person name="Spiga F.M."/>
            <person name="Popp O."/>
            <person name="Baur T."/>
            <person name="Gotta M."/>
            <person name="Meyer H.H."/>
        </authorList>
    </citation>
    <scope>FUNCTION</scope>
    <scope>DISRUPTION PHENOTYPE</scope>
</reference>
<reference key="8">
    <citation type="journal article" date="2007" name="Nat. Cell Biol.">
        <title>The ubiquitin-selective chaperone CDC-48/p97 links myosin assembly to human myopathy.</title>
        <authorList>
            <person name="Janiesch P.C."/>
            <person name="Kim J."/>
            <person name="Mouysset J."/>
            <person name="Barikbin R."/>
            <person name="Lochmueller H."/>
            <person name="Cassata G."/>
            <person name="Krause S."/>
            <person name="Hoppe T."/>
        </authorList>
    </citation>
    <scope>FUNCTION</scope>
    <scope>IDENTIFICATION IN A COMPLEX WITH UNC-45; UFD-2 AND CHN-1</scope>
    <scope>INTERACTION WITH CDC-48.2 AND UFD-2</scope>
    <scope>SUBCELLULAR LOCATION</scope>
    <scope>TISSUE SPECIFICITY</scope>
    <scope>DEVELOPMENTAL STAGE</scope>
    <scope>DISRUPTION PHENOTYPE</scope>
    <scope>MUTAGENESIS OF 804-ASP--ASN-809</scope>
</reference>
<reference key="9">
    <citation type="journal article" date="2008" name="Dev. Cell">
        <title>An Afg2/Spaf-related Cdc48-like AAA ATPase regulates the stability and activity of the C. elegans Aurora B kinase AIR-2.</title>
        <authorList>
            <person name="Heallen T.R."/>
            <person name="Adams H.P."/>
            <person name="Furuta T."/>
            <person name="Verbrugghe K.J."/>
            <person name="Schumacher J.M."/>
        </authorList>
    </citation>
    <scope>FUNCTION</scope>
    <scope>CATALYTIC ACTIVITY</scope>
    <scope>LACK OF INTERACTION WITH AIR-2</scope>
    <scope>DISRUPTION PHENOTYPE</scope>
</reference>
<reference key="10">
    <citation type="journal article" date="2008" name="Genes Cells">
        <title>p97 Homologs from Caenorhabditis elegans, CDC-48.1 and CDC-48.2, suppress the aggregate formation of huntingtin exon1 containing expanded polyQ repeat.</title>
        <authorList>
            <person name="Nishikori S."/>
            <person name="Yamanaka K."/>
            <person name="Sakurai T."/>
            <person name="Esaki M."/>
            <person name="Ogura T."/>
        </authorList>
    </citation>
    <scope>FUNCTION</scope>
    <scope>CATALYTIC ACTIVITY</scope>
    <scope>ACTIVITY REGULATION</scope>
    <scope>SUBUNIT</scope>
    <scope>MUTAGENESIS OF LYS-257 AND LYS-530</scope>
</reference>
<reference key="11">
    <citation type="journal article" date="2008" name="Mol. Cell. Biol.">
        <title>GTPase-mediated regulation of the unfolded protein response in Caenorhabditis elegans is dependent on the AAA+ ATPase CDC-48.</title>
        <authorList>
            <person name="Caruso M.E."/>
            <person name="Jenna S."/>
            <person name="Bouchecareilh M."/>
            <person name="Baillie D.L."/>
            <person name="Boismenu D."/>
            <person name="Halawani D."/>
            <person name="Latterich M."/>
            <person name="Chevet E."/>
        </authorList>
    </citation>
    <scope>FUNCTION</scope>
    <scope>IDENTIFICATION IN A COMPLEX WITH HIM-6 AND CRP-1</scope>
    <scope>INTERACTION WITH HIM-6 AND CRP-1</scope>
    <scope>DISRUPTION PHENOTYPE</scope>
</reference>
<reference key="12">
    <citation type="journal article" date="2008" name="Proc. Natl. Acad. Sci. U.S.A.">
        <title>Cell cycle progression requires the CDC-48UFD-1/NPL-4 complex for efficient DNA replication.</title>
        <authorList>
            <person name="Mouysset J."/>
            <person name="Deichsel A."/>
            <person name="Moser S."/>
            <person name="Hoege C."/>
            <person name="Hyman A.A."/>
            <person name="Gartner A."/>
            <person name="Hoppe T."/>
        </authorList>
    </citation>
    <scope>FUNCTION</scope>
    <scope>DISRUPTION PHENOTYPE</scope>
</reference>
<reference key="13">
    <citation type="journal article" date="2009" name="Biochem. Biophys. Res. Commun.">
        <title>ATX-3, CDC-48 and UBXN-5: a new trimolecular complex in Caenorhabditis elegans.</title>
        <authorList>
            <person name="Rodrigues A.J."/>
            <person name="Neves-Carvalho A."/>
            <person name="Ferro A."/>
            <person name="Rokka A."/>
            <person name="Corthals G."/>
            <person name="Logarinho E."/>
            <person name="Maciel P."/>
        </authorList>
    </citation>
    <scope>FUNCTION</scope>
    <scope>IDENTIFICATION IN A COMPLEX WITH ATX-3 AND UBXN-5</scope>
    <scope>INTERACTION WITH ATX-3 AND UBXN-5</scope>
</reference>
<reference key="14">
    <citation type="journal article" date="2009" name="J. Cell Sci.">
        <title>Caenorhabditis elegans p97 controls germline-specific sex determination by controlling the TRA-1 level in a CUL-2-dependent manner.</title>
        <authorList>
            <person name="Sasagawa Y."/>
            <person name="Otani M."/>
            <person name="Higashitani N."/>
            <person name="Higashitani A."/>
            <person name="Sato K."/>
            <person name="Ogura T."/>
            <person name="Yamanaka K."/>
        </authorList>
    </citation>
    <scope>FUNCTION</scope>
    <scope>DEVELOPMENTAL STAGE</scope>
</reference>
<reference key="15">
    <citation type="journal article" date="2010" name="Genes Cells">
        <title>Caenorhabditis elegans UBX cofactors for CDC-48/p97 control spermatogenesis.</title>
        <authorList>
            <person name="Sasagawa Y."/>
            <person name="Yamanaka K."/>
            <person name="Saito-Sasagawa Y."/>
            <person name="Ogura T."/>
        </authorList>
    </citation>
    <scope>IDENTIFICATION IN A COMPLEX WITH UBXN-3; UFD-1 AND NPL-4.1</scope>
    <scope>INTERACTION WITH UBXN-1; UBXN-2; UBXN-3; UBXN-4; UBXN-6 AND UFD-1</scope>
    <scope>SUBCELLULAR LOCATION</scope>
    <scope>DISRUPTION PHENOTYPE</scope>
</reference>
<reference key="16">
    <citation type="journal article" date="2011" name="J. Biol. Chem.">
        <title>Positive cooperativity of the p97 AAA ATPase is critical for essential functions.</title>
        <authorList>
            <person name="Nishikori S."/>
            <person name="Esaki M."/>
            <person name="Yamanaka K."/>
            <person name="Sugimoto S."/>
            <person name="Ogura T."/>
        </authorList>
    </citation>
    <scope>CATALYTIC ACTIVITY</scope>
    <scope>ACTIVITY REGULATION</scope>
    <scope>BIOPHYSICOCHEMICAL PROPERTIES</scope>
    <scope>MUTAGENESIS OF LYS-257; GLU-311; ASN-354; ARG-365; PRO-467; ARG-471; LYS-530; GLU-584; ASN-631 AND ARG-642</scope>
</reference>
<reference key="17">
    <citation type="journal article" date="2011" name="Mol. Cell">
        <title>CDC-48/p97 coordinates CDT-1 degradation with GINS chromatin dissociation to ensure faithful DNA replication.</title>
        <authorList>
            <person name="Franz A."/>
            <person name="Orth M."/>
            <person name="Pirson P.A."/>
            <person name="Sonneville R."/>
            <person name="Blow J.J."/>
            <person name="Gartner A."/>
            <person name="Stemmann O."/>
            <person name="Hoppe T."/>
        </authorList>
    </citation>
    <scope>FUNCTION</scope>
    <scope>DISRUPTION PHENOTYPE</scope>
</reference>
<reference key="18">
    <citation type="journal article" date="2011" name="Nat. Cell Biol.">
        <title>The Machado-Joseph disease deubiquitylase ATX-3 couples longevity and proteostasis.</title>
        <authorList>
            <person name="Kuhlbrodt K."/>
            <person name="Janiesch P.C."/>
            <person name="Kevei E."/>
            <person name="Segref A."/>
            <person name="Barikbin R."/>
            <person name="Hoppe T."/>
        </authorList>
    </citation>
    <scope>FUNCTION</scope>
    <scope>IDENTIFICATION IN A COMPLEX WITH ATX-3 AND UFD-2</scope>
    <scope>INTERACTION WITH ATX-3 AND UFD-2</scope>
    <scope>DISRUPTION PHENOTYPE</scope>
    <scope>MUTAGENESIS OF 804-ASP--ASN-809</scope>
</reference>
<reference key="19">
    <citation type="journal article" date="2012" name="PLoS ONE">
        <title>A pro-cathepsin L mutant is a luminal substrate for endoplasmic-reticulum-associated degradation in C. elegans.</title>
        <authorList>
            <person name="Miedel M.T."/>
            <person name="Graf N.J."/>
            <person name="Stephen K.E."/>
            <person name="Long O.S."/>
            <person name="Pak S.C."/>
            <person name="Perlmutter D.H."/>
            <person name="Silverman G.A."/>
            <person name="Luke C.J."/>
        </authorList>
    </citation>
    <scope>FUNCTION</scope>
    <scope>DISRUPTION PHENOTYPE</scope>
</reference>
<reference key="20">
    <citation type="journal article" date="2013" name="J. Cell Biol.">
        <title>The UBXN-2/p37/p47 adaptors of CDC-48/p97 regulate mitosis by limiting the centrosomal recruitment of Aurora A.</title>
        <authorList>
            <person name="Kress E."/>
            <person name="Schwager F."/>
            <person name="Holtackers R."/>
            <person name="Seiler J."/>
            <person name="Prodon F."/>
            <person name="Zanin E."/>
            <person name="Eiteneuer A."/>
            <person name="Toya M."/>
            <person name="Sugimoto A."/>
            <person name="Meyer H."/>
            <person name="Meraldi P."/>
            <person name="Gotta M."/>
        </authorList>
    </citation>
    <scope>INTERACTION WITH UBXN-2</scope>
</reference>
<reference key="21">
    <citation type="journal article" date="2013" name="Structure">
        <title>High-speed atomic force microscopic observation of ATP-dependent rotation of the AAA+ chaperone p97.</title>
        <authorList>
            <person name="Noi K."/>
            <person name="Yamamoto D."/>
            <person name="Nishikori S."/>
            <person name="Arita-Morioka K."/>
            <person name="Kato T."/>
            <person name="Ando T."/>
            <person name="Ogura T."/>
        </authorList>
    </citation>
    <scope>ACTIVITY REGULATION</scope>
    <scope>SUBUNIT</scope>
    <scope>MUTAGENESIS OF LYS-530 AND GLU-584</scope>
</reference>
<reference key="22">
    <citation type="journal article" date="2015" name="Biochem. Biophys. Res. Commun.">
        <title>Characterization of C-terminal adaptors, UFD-2 and UFD-3, of CDC-48 on the polyglutamine aggregation in C. elegans.</title>
        <authorList>
            <person name="Murayama Y."/>
            <person name="Ogura T."/>
            <person name="Yamanaka K."/>
        </authorList>
    </citation>
    <scope>INTERACTION WITH UFD-3 AND CDC-48.2</scope>
    <scope>SUBCELLULAR LOCATION</scope>
</reference>
<reference key="23">
    <citation type="journal article" date="2015" name="EMBO Rep.">
        <title>Genome-wide screen identifies a novel p97/CDC-48-dependent pathway regulating ER-stress-induced gene transcription.</title>
        <authorList>
            <person name="Marza E."/>
            <person name="Taouji S."/>
            <person name="Barroso K."/>
            <person name="Raymond A.A."/>
            <person name="Guignard L."/>
            <person name="Bonneu M."/>
            <person name="Pallares-Lupon N."/>
            <person name="Dupuy J.W."/>
            <person name="Fernandez-Zapico M.E."/>
            <person name="Rosenbaum J."/>
            <person name="Palladino F."/>
            <person name="Dupuy D."/>
            <person name="Chevet E."/>
        </authorList>
    </citation>
    <scope>FUNCTION</scope>
</reference>
<reference key="24">
    <citation type="journal article" date="2016" name="Nat. Commun.">
        <title>Chromatin-associated degradation is defined by UBXN-3/FAF1 to safeguard DNA replication fork progression.</title>
        <authorList>
            <person name="Franz A."/>
            <person name="Pirson P.A."/>
            <person name="Pilger D."/>
            <person name="Halder S."/>
            <person name="Achuthankutty D."/>
            <person name="Kashkar H."/>
            <person name="Ramadan K."/>
            <person name="Hoppe T."/>
        </authorList>
    </citation>
    <scope>FUNCTION</scope>
    <scope>IDENTIFICATION IN A COMPLEX WITH UBXN-3 AND CDT-1</scope>
    <scope>INTERACTION WITH UBXN-3 AND CDT-1</scope>
    <scope>DISRUPTION PHENOTYPE</scope>
</reference>
<reference key="25">
    <citation type="journal article" date="2016" name="Nat. Struct. Mol. Biol.">
        <title>E4 ligase-specific ubiquitination hubs coordinate DNA double-strand-break repair and apoptosis.</title>
        <authorList>
            <person name="Ackermann L."/>
            <person name="Schell M."/>
            <person name="Pokrzywa W."/>
            <person name="Kevei E."/>
            <person name="Gartner A."/>
            <person name="Schumacher B."/>
            <person name="Hoppe T."/>
        </authorList>
    </citation>
    <scope>INTERACTION WITH UFD-2</scope>
</reference>
<reference key="26">
    <citation type="journal article" date="2017" name="Nat. Cell Biol.">
        <title>CUL-2LRR-1 and UBXN-3 drive replisome disassembly during DNA replication termination and mitosis.</title>
        <authorList>
            <person name="Sonneville R."/>
            <person name="Moreno S.P."/>
            <person name="Knebel A."/>
            <person name="Johnson C."/>
            <person name="Hastie C.J."/>
            <person name="Gartner A."/>
            <person name="Gambus A."/>
            <person name="Labib K."/>
        </authorList>
    </citation>
    <scope>FUNCTION</scope>
    <scope>DISRUPTION PHENOTYPE</scope>
</reference>
<organism>
    <name type="scientific">Caenorhabditis elegans</name>
    <dbReference type="NCBI Taxonomy" id="6239"/>
    <lineage>
        <taxon>Eukaryota</taxon>
        <taxon>Metazoa</taxon>
        <taxon>Ecdysozoa</taxon>
        <taxon>Nematoda</taxon>
        <taxon>Chromadorea</taxon>
        <taxon>Rhabditida</taxon>
        <taxon>Rhabditina</taxon>
        <taxon>Rhabditomorpha</taxon>
        <taxon>Rhabditoidea</taxon>
        <taxon>Rhabditidae</taxon>
        <taxon>Peloderinae</taxon>
        <taxon>Caenorhabditis</taxon>
    </lineage>
</organism>